<dbReference type="EC" id="3.1.3.77" evidence="1"/>
<dbReference type="EMBL" id="CP000100">
    <property type="protein sequence ID" value="ABB58024.1"/>
    <property type="molecule type" value="Genomic_DNA"/>
</dbReference>
<dbReference type="RefSeq" id="WP_011244412.1">
    <property type="nucleotide sequence ID" value="NZ_JACJTX010000001.1"/>
</dbReference>
<dbReference type="SMR" id="Q31LP5"/>
<dbReference type="STRING" id="1140.Synpcc7942_1994"/>
<dbReference type="PaxDb" id="1140-Synpcc7942_1994"/>
<dbReference type="GeneID" id="72430867"/>
<dbReference type="KEGG" id="syf:Synpcc7942_1994"/>
<dbReference type="eggNOG" id="COG4229">
    <property type="taxonomic scope" value="Bacteria"/>
</dbReference>
<dbReference type="HOGENOM" id="CLU_023273_0_0_3"/>
<dbReference type="OrthoDB" id="9797416at2"/>
<dbReference type="BioCyc" id="SYNEL:SYNPCC7942_1994-MONOMER"/>
<dbReference type="UniPathway" id="UPA00904">
    <property type="reaction ID" value="UER00876"/>
</dbReference>
<dbReference type="UniPathway" id="UPA00904">
    <property type="reaction ID" value="UER00877"/>
</dbReference>
<dbReference type="Proteomes" id="UP000889800">
    <property type="component" value="Chromosome"/>
</dbReference>
<dbReference type="GO" id="GO:0043715">
    <property type="term" value="F:2,3-diketo-5-methylthiopentyl-1-phosphate enolase activity"/>
    <property type="evidence" value="ECO:0007669"/>
    <property type="project" value="UniProtKB-UniRule"/>
</dbReference>
<dbReference type="GO" id="GO:0043716">
    <property type="term" value="F:2-hydroxy-3-keto-5-methylthiopentenyl-1-phosphate phosphatase activity"/>
    <property type="evidence" value="ECO:0007669"/>
    <property type="project" value="UniProtKB-UniRule"/>
</dbReference>
<dbReference type="GO" id="GO:0043874">
    <property type="term" value="F:acireductone synthase activity"/>
    <property type="evidence" value="ECO:0007669"/>
    <property type="project" value="UniProtKB-EC"/>
</dbReference>
<dbReference type="GO" id="GO:0000287">
    <property type="term" value="F:magnesium ion binding"/>
    <property type="evidence" value="ECO:0007669"/>
    <property type="project" value="UniProtKB-UniRule"/>
</dbReference>
<dbReference type="GO" id="GO:0019509">
    <property type="term" value="P:L-methionine salvage from methylthioadenosine"/>
    <property type="evidence" value="ECO:0007669"/>
    <property type="project" value="UniProtKB-UniRule"/>
</dbReference>
<dbReference type="CDD" id="cd01629">
    <property type="entry name" value="HAD_EP"/>
    <property type="match status" value="1"/>
</dbReference>
<dbReference type="Gene3D" id="1.10.720.60">
    <property type="match status" value="1"/>
</dbReference>
<dbReference type="Gene3D" id="3.40.50.1000">
    <property type="entry name" value="HAD superfamily/HAD-like"/>
    <property type="match status" value="1"/>
</dbReference>
<dbReference type="HAMAP" id="MF_01681">
    <property type="entry name" value="Salvage_MtnC"/>
    <property type="match status" value="1"/>
</dbReference>
<dbReference type="InterPro" id="IPR023943">
    <property type="entry name" value="Enolase-ppase_E1"/>
</dbReference>
<dbReference type="InterPro" id="IPR036412">
    <property type="entry name" value="HAD-like_sf"/>
</dbReference>
<dbReference type="InterPro" id="IPR006439">
    <property type="entry name" value="HAD-SF_hydro_IA"/>
</dbReference>
<dbReference type="InterPro" id="IPR023214">
    <property type="entry name" value="HAD_sf"/>
</dbReference>
<dbReference type="NCBIfam" id="TIGR01691">
    <property type="entry name" value="enolase-ppase"/>
    <property type="match status" value="1"/>
</dbReference>
<dbReference type="NCBIfam" id="TIGR01549">
    <property type="entry name" value="HAD-SF-IA-v1"/>
    <property type="match status" value="1"/>
</dbReference>
<dbReference type="PANTHER" id="PTHR20371">
    <property type="entry name" value="ENOLASE-PHOSPHATASE E1"/>
    <property type="match status" value="1"/>
</dbReference>
<dbReference type="PANTHER" id="PTHR20371:SF1">
    <property type="entry name" value="ENOLASE-PHOSPHATASE E1"/>
    <property type="match status" value="1"/>
</dbReference>
<dbReference type="Pfam" id="PF00702">
    <property type="entry name" value="Hydrolase"/>
    <property type="match status" value="1"/>
</dbReference>
<dbReference type="SFLD" id="SFLDG01133">
    <property type="entry name" value="C1.5.4:_Enolase-phosphatase_Li"/>
    <property type="match status" value="1"/>
</dbReference>
<dbReference type="SFLD" id="SFLDF00044">
    <property type="entry name" value="enolase-phosphatase"/>
    <property type="match status" value="1"/>
</dbReference>
<dbReference type="SUPFAM" id="SSF56784">
    <property type="entry name" value="HAD-like"/>
    <property type="match status" value="1"/>
</dbReference>
<gene>
    <name evidence="1" type="primary">mtnC</name>
    <name type="ordered locus">Synpcc7942_1994</name>
</gene>
<evidence type="ECO:0000255" key="1">
    <source>
        <dbReference type="HAMAP-Rule" id="MF_01681"/>
    </source>
</evidence>
<reference key="1">
    <citation type="submission" date="2005-08" db="EMBL/GenBank/DDBJ databases">
        <title>Complete sequence of chromosome 1 of Synechococcus elongatus PCC 7942.</title>
        <authorList>
            <consortium name="US DOE Joint Genome Institute"/>
            <person name="Copeland A."/>
            <person name="Lucas S."/>
            <person name="Lapidus A."/>
            <person name="Barry K."/>
            <person name="Detter J.C."/>
            <person name="Glavina T."/>
            <person name="Hammon N."/>
            <person name="Israni S."/>
            <person name="Pitluck S."/>
            <person name="Schmutz J."/>
            <person name="Larimer F."/>
            <person name="Land M."/>
            <person name="Kyrpides N."/>
            <person name="Lykidis A."/>
            <person name="Golden S."/>
            <person name="Richardson P."/>
        </authorList>
    </citation>
    <scope>NUCLEOTIDE SEQUENCE [LARGE SCALE GENOMIC DNA]</scope>
    <source>
        <strain>ATCC 33912 / PCC 7942 / FACHB-805</strain>
    </source>
</reference>
<sequence>MPLPVSITTLLLDIEGTTTPVDFVFKVLFPYARDRVADFLATQGADPEVQADLDLLRQEYAQEAAAELPDWAGEDAIAAVPYIQWLIDSDRKSTGLKSLQGKIWEQGYVSGEIKGQLFADVLPAFQRWQAAGLAIAIFSSGSVQAQQLLFGYSEAGDLSPHLSGYFDTRTGPKREAASYGAIAAQLGKAPAQVLFVSDIPAELEAAATAGFQTRLSLRPGNATVEIGDWTTIHSFDEL</sequence>
<feature type="chain" id="PRO_0000357418" description="Enolase-phosphatase E1">
    <location>
        <begin position="1"/>
        <end position="238"/>
    </location>
</feature>
<comment type="function">
    <text evidence="1">Bifunctional enzyme that catalyzes the enolization of 2,3-diketo-5-methylthiopentyl-1-phosphate (DK-MTP-1-P) into the intermediate 2-hydroxy-3-keto-5-methylthiopentenyl-1-phosphate (HK-MTPenyl-1-P), which is then dephosphorylated to form the acireductone 1,2-dihydroxy-3-keto-5-methylthiopentene (DHK-MTPene).</text>
</comment>
<comment type="catalytic activity">
    <reaction evidence="1">
        <text>5-methylsulfanyl-2,3-dioxopentyl phosphate + H2O = 1,2-dihydroxy-5-(methylsulfanyl)pent-1-en-3-one + phosphate</text>
        <dbReference type="Rhea" id="RHEA:21700"/>
        <dbReference type="ChEBI" id="CHEBI:15377"/>
        <dbReference type="ChEBI" id="CHEBI:43474"/>
        <dbReference type="ChEBI" id="CHEBI:49252"/>
        <dbReference type="ChEBI" id="CHEBI:58828"/>
        <dbReference type="EC" id="3.1.3.77"/>
    </reaction>
</comment>
<comment type="cofactor">
    <cofactor evidence="1">
        <name>Mg(2+)</name>
        <dbReference type="ChEBI" id="CHEBI:18420"/>
    </cofactor>
    <text evidence="1">Binds 1 Mg(2+) ion per subunit.</text>
</comment>
<comment type="pathway">
    <text evidence="1">Amino-acid biosynthesis; L-methionine biosynthesis via salvage pathway; L-methionine from S-methyl-5-thio-alpha-D-ribose 1-phosphate: step 3/6.</text>
</comment>
<comment type="pathway">
    <text evidence="1">Amino-acid biosynthesis; L-methionine biosynthesis via salvage pathway; L-methionine from S-methyl-5-thio-alpha-D-ribose 1-phosphate: step 4/6.</text>
</comment>
<comment type="subunit">
    <text evidence="1">Monomer.</text>
</comment>
<comment type="similarity">
    <text evidence="1">Belongs to the HAD-like hydrolase superfamily. MasA/MtnC family.</text>
</comment>
<accession>Q31LP5</accession>
<proteinExistence type="inferred from homology"/>
<keyword id="KW-0028">Amino-acid biosynthesis</keyword>
<keyword id="KW-0378">Hydrolase</keyword>
<keyword id="KW-0460">Magnesium</keyword>
<keyword id="KW-0479">Metal-binding</keyword>
<keyword id="KW-0486">Methionine biosynthesis</keyword>
<keyword id="KW-1185">Reference proteome</keyword>
<name>MTNC_SYNE7</name>
<protein>
    <recommendedName>
        <fullName evidence="1">Enolase-phosphatase E1</fullName>
        <ecNumber evidence="1">3.1.3.77</ecNumber>
    </recommendedName>
    <alternativeName>
        <fullName evidence="1">2,3-diketo-5-methylthio-1-phosphopentane phosphatase</fullName>
    </alternativeName>
</protein>
<organism>
    <name type="scientific">Synechococcus elongatus (strain ATCC 33912 / PCC 7942 / FACHB-805)</name>
    <name type="common">Anacystis nidulans R2</name>
    <dbReference type="NCBI Taxonomy" id="1140"/>
    <lineage>
        <taxon>Bacteria</taxon>
        <taxon>Bacillati</taxon>
        <taxon>Cyanobacteriota</taxon>
        <taxon>Cyanophyceae</taxon>
        <taxon>Synechococcales</taxon>
        <taxon>Synechococcaceae</taxon>
        <taxon>Synechococcus</taxon>
    </lineage>
</organism>